<sequence>MIIMLFKKLSDVSEAEMQRLISRGSGLADVGDTVSAVLSDVRMKGDAALREYTKKFDKVELANFEVSEEEFEKALSEIGSELLGHLRIAAENIRAFHRAQMPETTWFMELQPGVVLGQKATPLESVGAYAPGGRASYPSTVLMTVIPARVAGVEQVIVCTPPRADGSVHPLTLAAAKVAGADKVFKLGGVQAIGAMAYGTETVPRVDKIVGPGNVFVTSAKMQVRDIAEIDFPAGPSEVLIIADESADAAMAASDIIAQAEHDPNAVSVLVTTSETLAEEVEQEVLAQAESTARSEIVKISLENAAVLIADSLDQCIDFSNKFAPEHLEIMVEDSDFVLDRIKNAGSIFIGNYAPVPVGDYASGTNHVLPTAGYAKIYSGLNINHFLKYSSIQKISKSGLESLKETVIALAEEEGLKAHADSIRARFGYRPSK</sequence>
<dbReference type="EC" id="1.1.1.23" evidence="1"/>
<dbReference type="EMBL" id="AE008384">
    <property type="protein sequence ID" value="AAM30120.1"/>
    <property type="molecule type" value="Genomic_DNA"/>
</dbReference>
<dbReference type="RefSeq" id="WP_011032377.1">
    <property type="nucleotide sequence ID" value="NC_003901.1"/>
</dbReference>
<dbReference type="SMR" id="Q8PZR8"/>
<dbReference type="GeneID" id="82159432"/>
<dbReference type="KEGG" id="mma:MM_0424"/>
<dbReference type="PATRIC" id="fig|192952.21.peg.511"/>
<dbReference type="eggNOG" id="arCOG04352">
    <property type="taxonomic scope" value="Archaea"/>
</dbReference>
<dbReference type="HOGENOM" id="CLU_006732_3_0_2"/>
<dbReference type="UniPathway" id="UPA00031">
    <property type="reaction ID" value="UER00014"/>
</dbReference>
<dbReference type="Proteomes" id="UP000000595">
    <property type="component" value="Chromosome"/>
</dbReference>
<dbReference type="GO" id="GO:0005737">
    <property type="term" value="C:cytoplasm"/>
    <property type="evidence" value="ECO:0007669"/>
    <property type="project" value="TreeGrafter"/>
</dbReference>
<dbReference type="GO" id="GO:0004399">
    <property type="term" value="F:histidinol dehydrogenase activity"/>
    <property type="evidence" value="ECO:0007669"/>
    <property type="project" value="UniProtKB-UniRule"/>
</dbReference>
<dbReference type="GO" id="GO:0051287">
    <property type="term" value="F:NAD binding"/>
    <property type="evidence" value="ECO:0007669"/>
    <property type="project" value="InterPro"/>
</dbReference>
<dbReference type="GO" id="GO:0008270">
    <property type="term" value="F:zinc ion binding"/>
    <property type="evidence" value="ECO:0007669"/>
    <property type="project" value="UniProtKB-UniRule"/>
</dbReference>
<dbReference type="GO" id="GO:0000105">
    <property type="term" value="P:L-histidine biosynthetic process"/>
    <property type="evidence" value="ECO:0007669"/>
    <property type="project" value="UniProtKB-UniRule"/>
</dbReference>
<dbReference type="CDD" id="cd06572">
    <property type="entry name" value="Histidinol_dh"/>
    <property type="match status" value="1"/>
</dbReference>
<dbReference type="FunFam" id="3.40.50.1980:FF:000001">
    <property type="entry name" value="Histidinol dehydrogenase"/>
    <property type="match status" value="1"/>
</dbReference>
<dbReference type="FunFam" id="3.40.50.1980:FF:000026">
    <property type="entry name" value="Histidinol dehydrogenase"/>
    <property type="match status" value="1"/>
</dbReference>
<dbReference type="Gene3D" id="1.20.5.1300">
    <property type="match status" value="1"/>
</dbReference>
<dbReference type="Gene3D" id="3.40.50.1980">
    <property type="entry name" value="Nitrogenase molybdenum iron protein domain"/>
    <property type="match status" value="2"/>
</dbReference>
<dbReference type="HAMAP" id="MF_01024">
    <property type="entry name" value="HisD"/>
    <property type="match status" value="1"/>
</dbReference>
<dbReference type="InterPro" id="IPR016161">
    <property type="entry name" value="Ald_DH/histidinol_DH"/>
</dbReference>
<dbReference type="InterPro" id="IPR001692">
    <property type="entry name" value="Histidinol_DH_CS"/>
</dbReference>
<dbReference type="InterPro" id="IPR022695">
    <property type="entry name" value="Histidinol_DH_monofunct"/>
</dbReference>
<dbReference type="InterPro" id="IPR012131">
    <property type="entry name" value="Hstdl_DH"/>
</dbReference>
<dbReference type="NCBIfam" id="TIGR00069">
    <property type="entry name" value="hisD"/>
    <property type="match status" value="1"/>
</dbReference>
<dbReference type="PANTHER" id="PTHR21256:SF2">
    <property type="entry name" value="HISTIDINE BIOSYNTHESIS TRIFUNCTIONAL PROTEIN"/>
    <property type="match status" value="1"/>
</dbReference>
<dbReference type="PANTHER" id="PTHR21256">
    <property type="entry name" value="HISTIDINOL DEHYDROGENASE HDH"/>
    <property type="match status" value="1"/>
</dbReference>
<dbReference type="Pfam" id="PF00815">
    <property type="entry name" value="Histidinol_dh"/>
    <property type="match status" value="1"/>
</dbReference>
<dbReference type="PIRSF" id="PIRSF000099">
    <property type="entry name" value="Histidinol_dh"/>
    <property type="match status" value="1"/>
</dbReference>
<dbReference type="PRINTS" id="PR00083">
    <property type="entry name" value="HOLDHDRGNASE"/>
</dbReference>
<dbReference type="SUPFAM" id="SSF53720">
    <property type="entry name" value="ALDH-like"/>
    <property type="match status" value="1"/>
</dbReference>
<dbReference type="PROSITE" id="PS00611">
    <property type="entry name" value="HISOL_DEHYDROGENASE"/>
    <property type="match status" value="1"/>
</dbReference>
<reference key="1">
    <citation type="journal article" date="2002" name="J. Mol. Microbiol. Biotechnol.">
        <title>The genome of Methanosarcina mazei: evidence for lateral gene transfer between Bacteria and Archaea.</title>
        <authorList>
            <person name="Deppenmeier U."/>
            <person name="Johann A."/>
            <person name="Hartsch T."/>
            <person name="Merkl R."/>
            <person name="Schmitz R.A."/>
            <person name="Martinez-Arias R."/>
            <person name="Henne A."/>
            <person name="Wiezer A."/>
            <person name="Baeumer S."/>
            <person name="Jacobi C."/>
            <person name="Brueggemann H."/>
            <person name="Lienard T."/>
            <person name="Christmann A."/>
            <person name="Boemecke M."/>
            <person name="Steckel S."/>
            <person name="Bhattacharyya A."/>
            <person name="Lykidis A."/>
            <person name="Overbeek R."/>
            <person name="Klenk H.-P."/>
            <person name="Gunsalus R.P."/>
            <person name="Fritz H.-J."/>
            <person name="Gottschalk G."/>
        </authorList>
    </citation>
    <scope>NUCLEOTIDE SEQUENCE [LARGE SCALE GENOMIC DNA]</scope>
    <source>
        <strain>ATCC BAA-159 / DSM 3647 / Goe1 / Go1 / JCM 11833 / OCM 88</strain>
    </source>
</reference>
<evidence type="ECO:0000255" key="1">
    <source>
        <dbReference type="HAMAP-Rule" id="MF_01024"/>
    </source>
</evidence>
<comment type="function">
    <text evidence="1">Catalyzes the sequential NAD-dependent oxidations of L-histidinol to L-histidinaldehyde and then to L-histidine.</text>
</comment>
<comment type="catalytic activity">
    <reaction evidence="1">
        <text>L-histidinol + 2 NAD(+) + H2O = L-histidine + 2 NADH + 3 H(+)</text>
        <dbReference type="Rhea" id="RHEA:20641"/>
        <dbReference type="ChEBI" id="CHEBI:15377"/>
        <dbReference type="ChEBI" id="CHEBI:15378"/>
        <dbReference type="ChEBI" id="CHEBI:57540"/>
        <dbReference type="ChEBI" id="CHEBI:57595"/>
        <dbReference type="ChEBI" id="CHEBI:57699"/>
        <dbReference type="ChEBI" id="CHEBI:57945"/>
        <dbReference type="EC" id="1.1.1.23"/>
    </reaction>
</comment>
<comment type="cofactor">
    <cofactor evidence="1">
        <name>Zn(2+)</name>
        <dbReference type="ChEBI" id="CHEBI:29105"/>
    </cofactor>
    <text evidence="1">Binds 1 zinc ion per subunit.</text>
</comment>
<comment type="pathway">
    <text evidence="1">Amino-acid biosynthesis; L-histidine biosynthesis; L-histidine from 5-phospho-alpha-D-ribose 1-diphosphate: step 9/9.</text>
</comment>
<comment type="similarity">
    <text evidence="1">Belongs to the histidinol dehydrogenase family.</text>
</comment>
<proteinExistence type="inferred from homology"/>
<protein>
    <recommendedName>
        <fullName evidence="1">Histidinol dehydrogenase</fullName>
        <shortName evidence="1">HDH</shortName>
        <ecNumber evidence="1">1.1.1.23</ecNumber>
    </recommendedName>
</protein>
<organism>
    <name type="scientific">Methanosarcina mazei (strain ATCC BAA-159 / DSM 3647 / Goe1 / Go1 / JCM 11833 / OCM 88)</name>
    <name type="common">Methanosarcina frisia</name>
    <dbReference type="NCBI Taxonomy" id="192952"/>
    <lineage>
        <taxon>Archaea</taxon>
        <taxon>Methanobacteriati</taxon>
        <taxon>Methanobacteriota</taxon>
        <taxon>Stenosarchaea group</taxon>
        <taxon>Methanomicrobia</taxon>
        <taxon>Methanosarcinales</taxon>
        <taxon>Methanosarcinaceae</taxon>
        <taxon>Methanosarcina</taxon>
    </lineage>
</organism>
<keyword id="KW-0028">Amino-acid biosynthesis</keyword>
<keyword id="KW-0368">Histidine biosynthesis</keyword>
<keyword id="KW-0479">Metal-binding</keyword>
<keyword id="KW-0520">NAD</keyword>
<keyword id="KW-0560">Oxidoreductase</keyword>
<keyword id="KW-0862">Zinc</keyword>
<feature type="chain" id="PRO_0000135897" description="Histidinol dehydrogenase">
    <location>
        <begin position="1"/>
        <end position="433"/>
    </location>
</feature>
<feature type="active site" description="Proton acceptor" evidence="1">
    <location>
        <position position="326"/>
    </location>
</feature>
<feature type="active site" description="Proton acceptor" evidence="1">
    <location>
        <position position="327"/>
    </location>
</feature>
<feature type="binding site" evidence="1">
    <location>
        <position position="129"/>
    </location>
    <ligand>
        <name>NAD(+)</name>
        <dbReference type="ChEBI" id="CHEBI:57540"/>
    </ligand>
</feature>
<feature type="binding site" evidence="1">
    <location>
        <position position="191"/>
    </location>
    <ligand>
        <name>NAD(+)</name>
        <dbReference type="ChEBI" id="CHEBI:57540"/>
    </ligand>
</feature>
<feature type="binding site" evidence="1">
    <location>
        <position position="214"/>
    </location>
    <ligand>
        <name>NAD(+)</name>
        <dbReference type="ChEBI" id="CHEBI:57540"/>
    </ligand>
</feature>
<feature type="binding site" evidence="1">
    <location>
        <position position="237"/>
    </location>
    <ligand>
        <name>substrate</name>
    </ligand>
</feature>
<feature type="binding site" evidence="1">
    <location>
        <position position="259"/>
    </location>
    <ligand>
        <name>substrate</name>
    </ligand>
</feature>
<feature type="binding site" evidence="1">
    <location>
        <position position="259"/>
    </location>
    <ligand>
        <name>Zn(2+)</name>
        <dbReference type="ChEBI" id="CHEBI:29105"/>
    </ligand>
</feature>
<feature type="binding site" evidence="1">
    <location>
        <position position="262"/>
    </location>
    <ligand>
        <name>substrate</name>
    </ligand>
</feature>
<feature type="binding site" evidence="1">
    <location>
        <position position="262"/>
    </location>
    <ligand>
        <name>Zn(2+)</name>
        <dbReference type="ChEBI" id="CHEBI:29105"/>
    </ligand>
</feature>
<feature type="binding site" evidence="1">
    <location>
        <position position="327"/>
    </location>
    <ligand>
        <name>substrate</name>
    </ligand>
</feature>
<feature type="binding site" evidence="1">
    <location>
        <position position="360"/>
    </location>
    <ligand>
        <name>substrate</name>
    </ligand>
</feature>
<feature type="binding site" evidence="1">
    <location>
        <position position="360"/>
    </location>
    <ligand>
        <name>Zn(2+)</name>
        <dbReference type="ChEBI" id="CHEBI:29105"/>
    </ligand>
</feature>
<feature type="binding site" evidence="1">
    <location>
        <position position="414"/>
    </location>
    <ligand>
        <name>substrate</name>
    </ligand>
</feature>
<feature type="binding site" evidence="1">
    <location>
        <position position="419"/>
    </location>
    <ligand>
        <name>substrate</name>
    </ligand>
</feature>
<feature type="binding site" evidence="1">
    <location>
        <position position="419"/>
    </location>
    <ligand>
        <name>Zn(2+)</name>
        <dbReference type="ChEBI" id="CHEBI:29105"/>
    </ligand>
</feature>
<name>HISX_METMA</name>
<accession>Q8PZR8</accession>
<gene>
    <name evidence="1" type="primary">hisD</name>
    <name type="ordered locus">MM_0424</name>
</gene>